<dbReference type="EC" id="3.4.22.-" evidence="18"/>
<dbReference type="EMBL" id="AF130356">
    <property type="protein sequence ID" value="AAD38507.2"/>
    <property type="molecule type" value="mRNA"/>
</dbReference>
<dbReference type="EMBL" id="AB026118">
    <property type="protein sequence ID" value="BAA83099.1"/>
    <property type="molecule type" value="mRNA"/>
</dbReference>
<dbReference type="EMBL" id="AF316597">
    <property type="protein sequence ID" value="AAG38589.1"/>
    <property type="molecule type" value="mRNA"/>
</dbReference>
<dbReference type="EMBL" id="BC030143">
    <property type="protein sequence ID" value="AAH30143.1"/>
    <property type="molecule type" value="mRNA"/>
</dbReference>
<dbReference type="EMBL" id="AL137399">
    <property type="protein sequence ID" value="CAB70725.1"/>
    <property type="molecule type" value="mRNA"/>
</dbReference>
<dbReference type="CCDS" id="CCDS11967.1">
    <molecule id="Q9UDY8-1"/>
</dbReference>
<dbReference type="CCDS" id="CCDS11968.1">
    <molecule id="Q9UDY8-2"/>
</dbReference>
<dbReference type="PIR" id="T46456">
    <property type="entry name" value="T46456"/>
</dbReference>
<dbReference type="RefSeq" id="NP_006776.1">
    <molecule id="Q9UDY8-1"/>
    <property type="nucleotide sequence ID" value="NM_006785.4"/>
</dbReference>
<dbReference type="RefSeq" id="NP_776216.1">
    <molecule id="Q9UDY8-2"/>
    <property type="nucleotide sequence ID" value="NM_173844.3"/>
</dbReference>
<dbReference type="PDB" id="2G7R">
    <property type="method" value="X-ray"/>
    <property type="resolution" value="2.70 A"/>
    <property type="chains" value="A/B=29-126"/>
</dbReference>
<dbReference type="PDB" id="3BFO">
    <property type="method" value="X-ray"/>
    <property type="resolution" value="1.15 A"/>
    <property type="chains" value="A/B/C/D=226-325"/>
</dbReference>
<dbReference type="PDB" id="3K0W">
    <property type="method" value="X-ray"/>
    <property type="resolution" value="2.80 A"/>
    <property type="chains" value="A=128-337"/>
</dbReference>
<dbReference type="PDB" id="3UO8">
    <property type="method" value="X-ray"/>
    <property type="resolution" value="1.90 A"/>
    <property type="chains" value="B/C=339-719"/>
</dbReference>
<dbReference type="PDB" id="3UOA">
    <property type="method" value="X-ray"/>
    <property type="resolution" value="1.75 A"/>
    <property type="chains" value="B/C=339-719"/>
</dbReference>
<dbReference type="PDB" id="3V4O">
    <property type="method" value="X-ray"/>
    <property type="resolution" value="2.10 A"/>
    <property type="chains" value="A=329-569"/>
</dbReference>
<dbReference type="PDB" id="3V55">
    <property type="method" value="X-ray"/>
    <property type="resolution" value="1.81 A"/>
    <property type="chains" value="A=334-719"/>
</dbReference>
<dbReference type="PDB" id="4I1P">
    <property type="method" value="X-ray"/>
    <property type="resolution" value="2.40 A"/>
    <property type="chains" value="A/C=339-719"/>
</dbReference>
<dbReference type="PDB" id="4I1R">
    <property type="method" value="X-ray"/>
    <property type="resolution" value="2.70 A"/>
    <property type="chains" value="A=339-719"/>
</dbReference>
<dbReference type="PDB" id="6F7I">
    <property type="method" value="X-ray"/>
    <property type="resolution" value="2.43 A"/>
    <property type="chains" value="A/B=329-728"/>
</dbReference>
<dbReference type="PDB" id="6GK2">
    <property type="method" value="EM"/>
    <property type="resolution" value="4.90 A"/>
    <property type="chains" value="F=30-121"/>
</dbReference>
<dbReference type="PDB" id="6H4A">
    <property type="method" value="X-ray"/>
    <property type="resolution" value="2.65 A"/>
    <property type="chains" value="A=329-728"/>
</dbReference>
<dbReference type="PDB" id="6YN8">
    <property type="method" value="X-ray"/>
    <property type="resolution" value="3.05 A"/>
    <property type="chains" value="A=334-719"/>
</dbReference>
<dbReference type="PDB" id="6YN9">
    <property type="method" value="X-ray"/>
    <property type="resolution" value="2.56 A"/>
    <property type="chains" value="A=329-728"/>
</dbReference>
<dbReference type="PDB" id="7A41">
    <property type="method" value="X-ray"/>
    <property type="resolution" value="2.13 A"/>
    <property type="chains" value="A/B=329-728"/>
</dbReference>
<dbReference type="PDB" id="7AK0">
    <property type="method" value="X-ray"/>
    <property type="resolution" value="2.32 A"/>
    <property type="chains" value="A/B=329-728"/>
</dbReference>
<dbReference type="PDB" id="7AK1">
    <property type="method" value="X-ray"/>
    <property type="resolution" value="2.51 A"/>
    <property type="chains" value="A=329-728"/>
</dbReference>
<dbReference type="PDB" id="7PAV">
    <property type="method" value="X-ray"/>
    <property type="resolution" value="2.20 A"/>
    <property type="chains" value="A/B=339-719"/>
</dbReference>
<dbReference type="PDB" id="7PAW">
    <property type="method" value="X-ray"/>
    <property type="resolution" value="2.19 A"/>
    <property type="chains" value="A/B=339-719"/>
</dbReference>
<dbReference type="PDB" id="8CZO">
    <property type="method" value="EM"/>
    <property type="resolution" value="4.30 A"/>
    <property type="chains" value="a/b/c/d/e/f/g/h/i/j/k/l/m/n/o/p/q/r/s/t/u/v=29-122"/>
</dbReference>
<dbReference type="PDB" id="8J5I">
    <property type="method" value="X-ray"/>
    <property type="resolution" value="2.10 A"/>
    <property type="chains" value="B=28-124"/>
</dbReference>
<dbReference type="PDB" id="8V4X">
    <property type="method" value="X-ray"/>
    <property type="resolution" value="2.49 A"/>
    <property type="chains" value="A/B/C/D/E/F=334-719"/>
</dbReference>
<dbReference type="PDBsum" id="2G7R"/>
<dbReference type="PDBsum" id="3BFO"/>
<dbReference type="PDBsum" id="3K0W"/>
<dbReference type="PDBsum" id="3UO8"/>
<dbReference type="PDBsum" id="3UOA"/>
<dbReference type="PDBsum" id="3V4O"/>
<dbReference type="PDBsum" id="3V55"/>
<dbReference type="PDBsum" id="4I1P"/>
<dbReference type="PDBsum" id="4I1R"/>
<dbReference type="PDBsum" id="6F7I"/>
<dbReference type="PDBsum" id="6GK2"/>
<dbReference type="PDBsum" id="6H4A"/>
<dbReference type="PDBsum" id="6YN8"/>
<dbReference type="PDBsum" id="6YN9"/>
<dbReference type="PDBsum" id="7A41"/>
<dbReference type="PDBsum" id="7AK0"/>
<dbReference type="PDBsum" id="7AK1"/>
<dbReference type="PDBsum" id="7PAV"/>
<dbReference type="PDBsum" id="7PAW"/>
<dbReference type="PDBsum" id="8CZO"/>
<dbReference type="PDBsum" id="8J5I"/>
<dbReference type="PDBsum" id="8V4X"/>
<dbReference type="EMDB" id="EMD-0013"/>
<dbReference type="EMDB" id="EMD-27100"/>
<dbReference type="SMR" id="Q9UDY8"/>
<dbReference type="BioGRID" id="116098">
    <property type="interactions" value="70"/>
</dbReference>
<dbReference type="ComplexPortal" id="CPX-8881">
    <property type="entry name" value="CARD-BCL10-MALT1 complex, CARD9 variant"/>
</dbReference>
<dbReference type="ComplexPortal" id="CPX-8901">
    <property type="entry name" value="CARD-BCL10-MALT1 complex, CARD11 variant"/>
</dbReference>
<dbReference type="ComplexPortal" id="CPX-8902">
    <property type="entry name" value="CARD-BCL10-MALT1 complex, CARD10 variant"/>
</dbReference>
<dbReference type="ComplexPortal" id="CPX-8906">
    <property type="entry name" value="CARD-BCL10-MALT1 complex, CARD14 variant"/>
</dbReference>
<dbReference type="CORUM" id="Q9UDY8"/>
<dbReference type="DIP" id="DIP-42833N"/>
<dbReference type="FunCoup" id="Q9UDY8">
    <property type="interactions" value="1731"/>
</dbReference>
<dbReference type="IntAct" id="Q9UDY8">
    <property type="interactions" value="53"/>
</dbReference>
<dbReference type="MINT" id="Q9UDY8"/>
<dbReference type="STRING" id="9606.ENSP00000497997"/>
<dbReference type="BindingDB" id="Q9UDY8"/>
<dbReference type="ChEMBL" id="CHEMBL3632452"/>
<dbReference type="DrugCentral" id="Q9UDY8"/>
<dbReference type="GuidetoPHARMACOLOGY" id="2983"/>
<dbReference type="MEROPS" id="C14.026"/>
<dbReference type="GlyCosmos" id="Q9UDY8">
    <property type="glycosylation" value="1 site, 1 glycan"/>
</dbReference>
<dbReference type="GlyGen" id="Q9UDY8">
    <property type="glycosylation" value="2 sites, 1 O-linked glycan (1 site)"/>
</dbReference>
<dbReference type="iPTMnet" id="Q9UDY8"/>
<dbReference type="PhosphoSitePlus" id="Q9UDY8"/>
<dbReference type="BioMuta" id="MALT1"/>
<dbReference type="DMDM" id="20455075"/>
<dbReference type="jPOST" id="Q9UDY8"/>
<dbReference type="MassIVE" id="Q9UDY8"/>
<dbReference type="PaxDb" id="9606-ENSP00000319279"/>
<dbReference type="PeptideAtlas" id="Q9UDY8"/>
<dbReference type="ProteomicsDB" id="84136">
    <molecule id="Q9UDY8-1"/>
</dbReference>
<dbReference type="ProteomicsDB" id="84137">
    <molecule id="Q9UDY8-2"/>
</dbReference>
<dbReference type="Pumba" id="Q9UDY8"/>
<dbReference type="Antibodypedia" id="1194">
    <property type="antibodies" value="785 antibodies from 44 providers"/>
</dbReference>
<dbReference type="DNASU" id="10892"/>
<dbReference type="Ensembl" id="ENST00000345724.7">
    <molecule id="Q9UDY8-2"/>
    <property type="protein sequence ID" value="ENSP00000304161.3"/>
    <property type="gene ID" value="ENSG00000172175.16"/>
</dbReference>
<dbReference type="Ensembl" id="ENST00000649217.2">
    <molecule id="Q9UDY8-1"/>
    <property type="protein sequence ID" value="ENSP00000497997.1"/>
    <property type="gene ID" value="ENSG00000172175.16"/>
</dbReference>
<dbReference type="GeneID" id="10892"/>
<dbReference type="KEGG" id="hsa:10892"/>
<dbReference type="MANE-Select" id="ENST00000649217.2">
    <property type="protein sequence ID" value="ENSP00000497997.1"/>
    <property type="RefSeq nucleotide sequence ID" value="NM_006785.4"/>
    <property type="RefSeq protein sequence ID" value="NP_006776.1"/>
</dbReference>
<dbReference type="UCSC" id="uc002lhm.3">
    <molecule id="Q9UDY8-1"/>
    <property type="organism name" value="human"/>
</dbReference>
<dbReference type="AGR" id="HGNC:6819"/>
<dbReference type="CTD" id="10892"/>
<dbReference type="DisGeNET" id="10892"/>
<dbReference type="GeneCards" id="MALT1"/>
<dbReference type="HGNC" id="HGNC:6819">
    <property type="gene designation" value="MALT1"/>
</dbReference>
<dbReference type="HPA" id="ENSG00000172175">
    <property type="expression patterns" value="Low tissue specificity"/>
</dbReference>
<dbReference type="MalaCards" id="MALT1"/>
<dbReference type="MIM" id="604860">
    <property type="type" value="gene"/>
</dbReference>
<dbReference type="MIM" id="615468">
    <property type="type" value="phenotype"/>
</dbReference>
<dbReference type="neXtProt" id="NX_Q9UDY8"/>
<dbReference type="OpenTargets" id="ENSG00000172175"/>
<dbReference type="Orphanet" id="397964">
    <property type="disease" value="Combined immunodeficiency due to MALT1 deficiency"/>
</dbReference>
<dbReference type="Orphanet" id="52417">
    <property type="disease" value="MALT lymphoma"/>
</dbReference>
<dbReference type="PharmGKB" id="PA30568"/>
<dbReference type="VEuPathDB" id="HostDB:ENSG00000172175"/>
<dbReference type="eggNOG" id="ENOG502QUZM">
    <property type="taxonomic scope" value="Eukaryota"/>
</dbReference>
<dbReference type="GeneTree" id="ENSGT00390000018044"/>
<dbReference type="HOGENOM" id="CLU_014796_0_0_1"/>
<dbReference type="InParanoid" id="Q9UDY8"/>
<dbReference type="OMA" id="CLMSDGP"/>
<dbReference type="OrthoDB" id="412369at2759"/>
<dbReference type="PAN-GO" id="Q9UDY8">
    <property type="GO annotations" value="4 GO annotations based on evolutionary models"/>
</dbReference>
<dbReference type="PhylomeDB" id="Q9UDY8"/>
<dbReference type="TreeFam" id="TF319744"/>
<dbReference type="PathwayCommons" id="Q9UDY8"/>
<dbReference type="Reactome" id="R-HSA-1169091">
    <property type="pathway name" value="Activation of NF-kappaB in B cells"/>
</dbReference>
<dbReference type="Reactome" id="R-HSA-202424">
    <property type="pathway name" value="Downstream TCR signaling"/>
</dbReference>
<dbReference type="Reactome" id="R-HSA-2871837">
    <property type="pathway name" value="FCERI mediated NF-kB activation"/>
</dbReference>
<dbReference type="Reactome" id="R-HSA-5607764">
    <property type="pathway name" value="CLEC7A (Dectin-1) signaling"/>
</dbReference>
<dbReference type="Reactome" id="R-HSA-5660668">
    <property type="pathway name" value="CLEC7A/inflammasome pathway"/>
</dbReference>
<dbReference type="SignaLink" id="Q9UDY8"/>
<dbReference type="SIGNOR" id="Q9UDY8"/>
<dbReference type="BioGRID-ORCS" id="10892">
    <property type="hits" value="14 hits in 1170 CRISPR screens"/>
</dbReference>
<dbReference type="ChiTaRS" id="MALT1">
    <property type="organism name" value="human"/>
</dbReference>
<dbReference type="EvolutionaryTrace" id="Q9UDY8"/>
<dbReference type="GeneWiki" id="MALT1"/>
<dbReference type="GenomeRNAi" id="10892"/>
<dbReference type="Pharos" id="Q9UDY8">
    <property type="development level" value="Tchem"/>
</dbReference>
<dbReference type="PRO" id="PR:Q9UDY8"/>
<dbReference type="Proteomes" id="UP000005640">
    <property type="component" value="Chromosome 18"/>
</dbReference>
<dbReference type="RNAct" id="Q9UDY8">
    <property type="molecule type" value="protein"/>
</dbReference>
<dbReference type="Bgee" id="ENSG00000172175">
    <property type="expression patterns" value="Expressed in colonic epithelium and 187 other cell types or tissues"/>
</dbReference>
<dbReference type="ExpressionAtlas" id="Q9UDY8">
    <property type="expression patterns" value="baseline and differential"/>
</dbReference>
<dbReference type="GO" id="GO:0032449">
    <property type="term" value="C:CBM complex"/>
    <property type="evidence" value="ECO:0000314"/>
    <property type="project" value="UniProtKB"/>
</dbReference>
<dbReference type="GO" id="GO:0005737">
    <property type="term" value="C:cytoplasm"/>
    <property type="evidence" value="ECO:0000314"/>
    <property type="project" value="UniProtKB"/>
</dbReference>
<dbReference type="GO" id="GO:0005829">
    <property type="term" value="C:cytosol"/>
    <property type="evidence" value="ECO:0000314"/>
    <property type="project" value="HPA"/>
</dbReference>
<dbReference type="GO" id="GO:0001650">
    <property type="term" value="C:fibrillar center"/>
    <property type="evidence" value="ECO:0000314"/>
    <property type="project" value="HPA"/>
</dbReference>
<dbReference type="GO" id="GO:0005634">
    <property type="term" value="C:nucleus"/>
    <property type="evidence" value="ECO:0000314"/>
    <property type="project" value="UniProtKB"/>
</dbReference>
<dbReference type="GO" id="GO:0048471">
    <property type="term" value="C:perinuclear region of cytoplasm"/>
    <property type="evidence" value="ECO:0007669"/>
    <property type="project" value="UniProtKB-SubCell"/>
</dbReference>
<dbReference type="GO" id="GO:0002096">
    <property type="term" value="C:polkadots"/>
    <property type="evidence" value="ECO:0007669"/>
    <property type="project" value="Ensembl"/>
</dbReference>
<dbReference type="GO" id="GO:0032991">
    <property type="term" value="C:protein-containing complex"/>
    <property type="evidence" value="ECO:0000314"/>
    <property type="project" value="UniProtKB"/>
</dbReference>
<dbReference type="GO" id="GO:0004197">
    <property type="term" value="F:cysteine-type endopeptidase activity"/>
    <property type="evidence" value="ECO:0000303"/>
    <property type="project" value="UniProtKB"/>
</dbReference>
<dbReference type="GO" id="GO:0061133">
    <property type="term" value="F:endopeptidase activator activity"/>
    <property type="evidence" value="ECO:0000315"/>
    <property type="project" value="ARUK-UCL"/>
</dbReference>
<dbReference type="GO" id="GO:0004175">
    <property type="term" value="F:endopeptidase activity"/>
    <property type="evidence" value="ECO:0000314"/>
    <property type="project" value="UniProtKB"/>
</dbReference>
<dbReference type="GO" id="GO:0042802">
    <property type="term" value="F:identical protein binding"/>
    <property type="evidence" value="ECO:0000353"/>
    <property type="project" value="IntAct"/>
</dbReference>
<dbReference type="GO" id="GO:0008233">
    <property type="term" value="F:peptidase activity"/>
    <property type="evidence" value="ECO:0000314"/>
    <property type="project" value="BHF-UCL"/>
</dbReference>
<dbReference type="GO" id="GO:0002020">
    <property type="term" value="F:protease binding"/>
    <property type="evidence" value="ECO:0007669"/>
    <property type="project" value="Ensembl"/>
</dbReference>
<dbReference type="GO" id="GO:0036094">
    <property type="term" value="F:small molecule binding"/>
    <property type="evidence" value="ECO:0000269"/>
    <property type="project" value="DisProt"/>
</dbReference>
<dbReference type="GO" id="GO:0004842">
    <property type="term" value="F:ubiquitin-protein transferase activity"/>
    <property type="evidence" value="ECO:0000314"/>
    <property type="project" value="UniProtKB"/>
</dbReference>
<dbReference type="GO" id="GO:0042113">
    <property type="term" value="P:B cell activation"/>
    <property type="evidence" value="ECO:0000318"/>
    <property type="project" value="GO_Central"/>
</dbReference>
<dbReference type="GO" id="GO:0001923">
    <property type="term" value="P:B-1 B cell differentiation"/>
    <property type="evidence" value="ECO:0007669"/>
    <property type="project" value="Ensembl"/>
</dbReference>
<dbReference type="GO" id="GO:0006952">
    <property type="term" value="P:defense response"/>
    <property type="evidence" value="ECO:0000303"/>
    <property type="project" value="UniProtKB"/>
</dbReference>
<dbReference type="GO" id="GO:0045087">
    <property type="term" value="P:innate immune response"/>
    <property type="evidence" value="ECO:0000318"/>
    <property type="project" value="GO_Central"/>
</dbReference>
<dbReference type="GO" id="GO:0031663">
    <property type="term" value="P:lipopolysaccharide-mediated signaling pathway"/>
    <property type="evidence" value="ECO:0007669"/>
    <property type="project" value="Ensembl"/>
</dbReference>
<dbReference type="GO" id="GO:0043066">
    <property type="term" value="P:negative regulation of apoptotic process"/>
    <property type="evidence" value="ECO:0000303"/>
    <property type="project" value="UniProtKB"/>
</dbReference>
<dbReference type="GO" id="GO:0051168">
    <property type="term" value="P:nuclear export"/>
    <property type="evidence" value="ECO:0000314"/>
    <property type="project" value="UniProtKB"/>
</dbReference>
<dbReference type="GO" id="GO:0043123">
    <property type="term" value="P:positive regulation of canonical NF-kappaB signal transduction"/>
    <property type="evidence" value="ECO:0000314"/>
    <property type="project" value="UniProt"/>
</dbReference>
<dbReference type="GO" id="GO:0032731">
    <property type="term" value="P:positive regulation of interleukin-1 beta production"/>
    <property type="evidence" value="ECO:0000315"/>
    <property type="project" value="ARUK-UCL"/>
</dbReference>
<dbReference type="GO" id="GO:0032743">
    <property type="term" value="P:positive regulation of interleukin-2 production"/>
    <property type="evidence" value="ECO:0000315"/>
    <property type="project" value="UniProtKB"/>
</dbReference>
<dbReference type="GO" id="GO:0031398">
    <property type="term" value="P:positive regulation of protein ubiquitination"/>
    <property type="evidence" value="ECO:0000303"/>
    <property type="project" value="BHF-UCL"/>
</dbReference>
<dbReference type="GO" id="GO:0002726">
    <property type="term" value="P:positive regulation of T cell cytokine production"/>
    <property type="evidence" value="ECO:0000315"/>
    <property type="project" value="UniProtKB"/>
</dbReference>
<dbReference type="GO" id="GO:2000321">
    <property type="term" value="P:positive regulation of T-helper 17 cell differentiation"/>
    <property type="evidence" value="ECO:0000250"/>
    <property type="project" value="UniProtKB"/>
</dbReference>
<dbReference type="GO" id="GO:0006508">
    <property type="term" value="P:proteolysis"/>
    <property type="evidence" value="ECO:0000314"/>
    <property type="project" value="BHF-UCL"/>
</dbReference>
<dbReference type="GO" id="GO:0051603">
    <property type="term" value="P:proteolysis involved in protein catabolic process"/>
    <property type="evidence" value="ECO:0000314"/>
    <property type="project" value="UniProtKB"/>
</dbReference>
<dbReference type="GO" id="GO:0042981">
    <property type="term" value="P:regulation of apoptotic process"/>
    <property type="evidence" value="ECO:0000314"/>
    <property type="project" value="MGI"/>
</dbReference>
<dbReference type="GO" id="GO:0050856">
    <property type="term" value="P:regulation of T cell receptor signaling pathway"/>
    <property type="evidence" value="ECO:0007669"/>
    <property type="project" value="Ensembl"/>
</dbReference>
<dbReference type="GO" id="GO:0009620">
    <property type="term" value="P:response to fungus"/>
    <property type="evidence" value="ECO:0007669"/>
    <property type="project" value="Ensembl"/>
</dbReference>
<dbReference type="GO" id="GO:0042098">
    <property type="term" value="P:T cell proliferation"/>
    <property type="evidence" value="ECO:0007669"/>
    <property type="project" value="Ensembl"/>
</dbReference>
<dbReference type="GO" id="GO:0050852">
    <property type="term" value="P:T cell receptor signaling pathway"/>
    <property type="evidence" value="ECO:0000314"/>
    <property type="project" value="UniProtKB"/>
</dbReference>
<dbReference type="CDD" id="cd08783">
    <property type="entry name" value="Death_MALT1"/>
    <property type="match status" value="1"/>
</dbReference>
<dbReference type="CDD" id="cd00096">
    <property type="entry name" value="Ig"/>
    <property type="match status" value="1"/>
</dbReference>
<dbReference type="FunFam" id="1.10.533.10:FF:000039">
    <property type="entry name" value="Mucosa-associated lymphoid tissue lymphoma translocation protein 1"/>
    <property type="match status" value="1"/>
</dbReference>
<dbReference type="FunFam" id="2.60.40.10:FF:000492">
    <property type="entry name" value="Mucosa-associated lymphoid tissue lymphoma translocation protein 1"/>
    <property type="match status" value="1"/>
</dbReference>
<dbReference type="FunFam" id="2.60.40.3360:FF:000001">
    <property type="entry name" value="Mucosa-associated lymphoid tissue lymphoma translocation protein 1"/>
    <property type="match status" value="1"/>
</dbReference>
<dbReference type="FunFam" id="3.40.50.1460:FF:000004">
    <property type="entry name" value="Mucosa-associated lymphoid tissue lymphoma translocation protein 1"/>
    <property type="match status" value="1"/>
</dbReference>
<dbReference type="FunFam" id="2.60.40.10:FF:000585">
    <property type="entry name" value="mucosa-associated lymphoid tissue lymphoma translocation protein 1"/>
    <property type="match status" value="1"/>
</dbReference>
<dbReference type="Gene3D" id="2.60.40.3360">
    <property type="match status" value="1"/>
</dbReference>
<dbReference type="Gene3D" id="3.40.50.1460">
    <property type="match status" value="1"/>
</dbReference>
<dbReference type="Gene3D" id="1.10.533.10">
    <property type="entry name" value="Death Domain, Fas"/>
    <property type="match status" value="1"/>
</dbReference>
<dbReference type="Gene3D" id="2.60.40.10">
    <property type="entry name" value="Immunoglobulins"/>
    <property type="match status" value="2"/>
</dbReference>
<dbReference type="InterPro" id="IPR029030">
    <property type="entry name" value="Caspase-like_dom_sf"/>
</dbReference>
<dbReference type="InterPro" id="IPR052039">
    <property type="entry name" value="Caspase-related_regulators"/>
</dbReference>
<dbReference type="InterPro" id="IPR011029">
    <property type="entry name" value="DEATH-like_dom_sf"/>
</dbReference>
<dbReference type="InterPro" id="IPR007110">
    <property type="entry name" value="Ig-like_dom"/>
</dbReference>
<dbReference type="InterPro" id="IPR036179">
    <property type="entry name" value="Ig-like_dom_sf"/>
</dbReference>
<dbReference type="InterPro" id="IPR013783">
    <property type="entry name" value="Ig-like_fold"/>
</dbReference>
<dbReference type="InterPro" id="IPR003599">
    <property type="entry name" value="Ig_sub"/>
</dbReference>
<dbReference type="InterPro" id="IPR003598">
    <property type="entry name" value="Ig_sub2"/>
</dbReference>
<dbReference type="InterPro" id="IPR037940">
    <property type="entry name" value="MALT1_Death"/>
</dbReference>
<dbReference type="InterPro" id="IPR041077">
    <property type="entry name" value="MALT1_Ig"/>
</dbReference>
<dbReference type="InterPro" id="IPR033540">
    <property type="entry name" value="MALT1_IG-like_dom_sf"/>
</dbReference>
<dbReference type="InterPro" id="IPR011600">
    <property type="entry name" value="Pept_C14_caspase"/>
</dbReference>
<dbReference type="InterPro" id="IPR001309">
    <property type="entry name" value="Pept_C14_p20"/>
</dbReference>
<dbReference type="PANTHER" id="PTHR22576">
    <property type="entry name" value="MUCOSA ASSOCIATED LYMPHOID TISSUE LYMPHOMA TRANSLOCATION PROTEIN 1/PARACASPASE"/>
    <property type="match status" value="1"/>
</dbReference>
<dbReference type="PANTHER" id="PTHR22576:SF40">
    <property type="entry name" value="MUCOSA-ASSOCIATED LYMPHOID TISSUE LYMPHOMA TRANSLOCATION PROTEIN 1"/>
    <property type="match status" value="1"/>
</dbReference>
<dbReference type="Pfam" id="PF13895">
    <property type="entry name" value="Ig_2"/>
    <property type="match status" value="1"/>
</dbReference>
<dbReference type="Pfam" id="PF13927">
    <property type="entry name" value="Ig_3"/>
    <property type="match status" value="1"/>
</dbReference>
<dbReference type="Pfam" id="PF18703">
    <property type="entry name" value="MALT1_Ig"/>
    <property type="match status" value="1"/>
</dbReference>
<dbReference type="Pfam" id="PF00656">
    <property type="entry name" value="Peptidase_C14"/>
    <property type="match status" value="1"/>
</dbReference>
<dbReference type="SMART" id="SM00409">
    <property type="entry name" value="IG"/>
    <property type="match status" value="2"/>
</dbReference>
<dbReference type="SMART" id="SM00408">
    <property type="entry name" value="IGc2"/>
    <property type="match status" value="2"/>
</dbReference>
<dbReference type="SUPFAM" id="SSF52129">
    <property type="entry name" value="Caspase-like"/>
    <property type="match status" value="1"/>
</dbReference>
<dbReference type="SUPFAM" id="SSF47986">
    <property type="entry name" value="DEATH domain"/>
    <property type="match status" value="1"/>
</dbReference>
<dbReference type="SUPFAM" id="SSF48726">
    <property type="entry name" value="Immunoglobulin"/>
    <property type="match status" value="2"/>
</dbReference>
<dbReference type="PROSITE" id="PS50208">
    <property type="entry name" value="CASPASE_P20"/>
    <property type="match status" value="1"/>
</dbReference>
<dbReference type="PROSITE" id="PS50835">
    <property type="entry name" value="IG_LIKE"/>
    <property type="match status" value="2"/>
</dbReference>
<feature type="initiator methionine" description="Removed" evidence="26">
    <location>
        <position position="1"/>
    </location>
</feature>
<feature type="chain" id="PRO_0000072821" description="Mucosa-associated lymphoid tissue lymphoma translocation protein 1">
    <location>
        <begin position="2"/>
        <end position="824"/>
    </location>
</feature>
<feature type="domain" description="Death">
    <location>
        <begin position="39"/>
        <end position="126"/>
    </location>
</feature>
<feature type="domain" description="Ig-like C2-type 1">
    <location>
        <begin position="125"/>
        <end position="201"/>
    </location>
</feature>
<feature type="domain" description="Ig-like C2-type 2">
    <location>
        <begin position="212"/>
        <end position="305"/>
    </location>
</feature>
<feature type="region of interest" description="Disordered" evidence="4">
    <location>
        <begin position="1"/>
        <end position="27"/>
    </location>
</feature>
<feature type="region of interest" description="Caspase-like">
    <location>
        <begin position="348"/>
        <end position="562"/>
    </location>
</feature>
<feature type="short sequence motif" description="Nuclear export signal">
    <location>
        <begin position="369"/>
        <end position="376"/>
    </location>
</feature>
<feature type="compositionally biased region" description="Low complexity" evidence="4">
    <location>
        <begin position="11"/>
        <end position="27"/>
    </location>
</feature>
<feature type="active site" evidence="1">
    <location>
        <position position="415"/>
    </location>
</feature>
<feature type="active site" evidence="1">
    <location>
        <position position="464"/>
    </location>
</feature>
<feature type="site" description="Breakpoint for translocation to form BIRC2-MALT1">
    <location>
        <begin position="126"/>
        <end position="127"/>
    </location>
</feature>
<feature type="site" description="Breakpoint for translocation to form BIRC2-MALT1">
    <location>
        <begin position="216"/>
        <end position="217"/>
    </location>
</feature>
<feature type="site" description="Breakpoint for translocation to form BIRC2-MALT1">
    <location>
        <begin position="320"/>
        <end position="321"/>
    </location>
</feature>
<feature type="site" description="Breakpoint for translocation to form BIRC2-MALT1">
    <location>
        <begin position="323"/>
        <end position="324"/>
    </location>
</feature>
<feature type="site" description="Breakpoint for translocation to form BIRC2-MALT1">
    <location>
        <begin position="329"/>
        <end position="330"/>
    </location>
</feature>
<feature type="modified residue" description="N-acetylserine" evidence="26">
    <location>
        <position position="2"/>
    </location>
</feature>
<feature type="modified residue" description="Phosphoserine" evidence="25">
    <location>
        <position position="135"/>
    </location>
</feature>
<feature type="disulfide bond" evidence="3">
    <location>
        <begin position="147"/>
        <end position="190"/>
    </location>
</feature>
<feature type="disulfide bond" evidence="3">
    <location>
        <begin position="248"/>
        <end position="290"/>
    </location>
</feature>
<feature type="splice variant" id="VSP_000844" description="In isoform 2." evidence="20 22">
    <location>
        <begin position="309"/>
        <end position="319"/>
    </location>
</feature>
<feature type="sequence variant" id="VAR_070857" description="In IMD12; dbSNP:rs398123058." evidence="14">
    <original>S</original>
    <variation>I</variation>
    <location>
        <position position="89"/>
    </location>
</feature>
<feature type="sequence variant" id="VAR_048620" description="In dbSNP:rs35533328.">
    <original>I</original>
    <variation>V</variation>
    <location>
        <position position="641"/>
    </location>
</feature>
<feature type="mutagenesis site" description="Slight decrease in NF-kappa-B activation." evidence="9">
    <original>C</original>
    <variation>A</variation>
    <location>
        <position position="464"/>
    </location>
</feature>
<feature type="mutagenesis site" description="Abolishes binding to TRAF6." evidence="11">
    <original>E</original>
    <variation>A</variation>
    <location>
        <position position="653"/>
    </location>
</feature>
<feature type="mutagenesis site" description="Abolishes binding to TRAF6." evidence="11">
    <original>E</original>
    <variation>A</variation>
    <location>
        <position position="806"/>
    </location>
</feature>
<feature type="helix" evidence="35">
    <location>
        <begin position="30"/>
        <end position="32"/>
    </location>
</feature>
<feature type="helix" evidence="35">
    <location>
        <begin position="35"/>
        <end position="47"/>
    </location>
</feature>
<feature type="helix" evidence="35">
    <location>
        <begin position="50"/>
        <end position="52"/>
    </location>
</feature>
<feature type="helix" evidence="35">
    <location>
        <begin position="54"/>
        <end position="64"/>
    </location>
</feature>
<feature type="helix" evidence="35">
    <location>
        <begin position="71"/>
        <end position="78"/>
    </location>
</feature>
<feature type="helix" evidence="35">
    <location>
        <begin position="79"/>
        <end position="82"/>
    </location>
</feature>
<feature type="helix" evidence="35">
    <location>
        <begin position="88"/>
        <end position="98"/>
    </location>
</feature>
<feature type="helix" evidence="35">
    <location>
        <begin position="103"/>
        <end position="121"/>
    </location>
</feature>
<feature type="strand" evidence="28">
    <location>
        <begin position="129"/>
        <end position="131"/>
    </location>
</feature>
<feature type="strand" evidence="28">
    <location>
        <begin position="136"/>
        <end position="139"/>
    </location>
</feature>
<feature type="strand" evidence="28">
    <location>
        <begin position="142"/>
        <end position="147"/>
    </location>
</feature>
<feature type="turn" evidence="28">
    <location>
        <begin position="151"/>
        <end position="154"/>
    </location>
</feature>
<feature type="strand" evidence="28">
    <location>
        <begin position="155"/>
        <end position="162"/>
    </location>
</feature>
<feature type="strand" evidence="28">
    <location>
        <begin position="172"/>
        <end position="177"/>
    </location>
</feature>
<feature type="helix" evidence="28">
    <location>
        <begin position="182"/>
        <end position="184"/>
    </location>
</feature>
<feature type="strand" evidence="28">
    <location>
        <begin position="186"/>
        <end position="193"/>
    </location>
</feature>
<feature type="strand" evidence="28">
    <location>
        <begin position="204"/>
        <end position="209"/>
    </location>
</feature>
<feature type="helix" evidence="28">
    <location>
        <begin position="213"/>
        <end position="215"/>
    </location>
</feature>
<feature type="strand" evidence="27">
    <location>
        <begin position="228"/>
        <end position="231"/>
    </location>
</feature>
<feature type="strand" evidence="27">
    <location>
        <begin position="236"/>
        <end position="238"/>
    </location>
</feature>
<feature type="strand" evidence="27">
    <location>
        <begin position="244"/>
        <end position="247"/>
    </location>
</feature>
<feature type="strand" evidence="27">
    <location>
        <begin position="249"/>
        <end position="251"/>
    </location>
</feature>
<feature type="strand" evidence="27">
    <location>
        <begin position="257"/>
        <end position="262"/>
    </location>
</feature>
<feature type="strand" evidence="27">
    <location>
        <begin position="272"/>
        <end position="279"/>
    </location>
</feature>
<feature type="helix" evidence="27">
    <location>
        <begin position="282"/>
        <end position="284"/>
    </location>
</feature>
<feature type="strand" evidence="27">
    <location>
        <begin position="286"/>
        <end position="293"/>
    </location>
</feature>
<feature type="strand" evidence="27">
    <location>
        <begin position="298"/>
        <end position="300"/>
    </location>
</feature>
<feature type="strand" evidence="27">
    <location>
        <begin position="304"/>
        <end position="308"/>
    </location>
</feature>
<feature type="strand" evidence="29">
    <location>
        <begin position="343"/>
        <end position="349"/>
    </location>
</feature>
<feature type="strand" evidence="29">
    <location>
        <begin position="354"/>
        <end position="356"/>
    </location>
</feature>
<feature type="helix" evidence="29">
    <location>
        <begin position="362"/>
        <end position="375"/>
    </location>
</feature>
<feature type="strand" evidence="29">
    <location>
        <begin position="379"/>
        <end position="385"/>
    </location>
</feature>
<feature type="helix" evidence="29">
    <location>
        <begin position="388"/>
        <end position="400"/>
    </location>
</feature>
<feature type="strand" evidence="29">
    <location>
        <begin position="407"/>
        <end position="414"/>
    </location>
</feature>
<feature type="strand" evidence="29">
    <location>
        <begin position="416"/>
        <end position="419"/>
    </location>
</feature>
<feature type="strand" evidence="29">
    <location>
        <begin position="422"/>
        <end position="425"/>
    </location>
</feature>
<feature type="helix" evidence="29">
    <location>
        <begin position="436"/>
        <end position="438"/>
    </location>
</feature>
<feature type="strand" evidence="29">
    <location>
        <begin position="439"/>
        <end position="441"/>
    </location>
</feature>
<feature type="helix" evidence="29">
    <location>
        <begin position="442"/>
        <end position="451"/>
    </location>
</feature>
<feature type="strand" evidence="29">
    <location>
        <begin position="455"/>
        <end position="463"/>
    </location>
</feature>
<feature type="strand" evidence="29">
    <location>
        <begin position="486"/>
        <end position="492"/>
    </location>
</feature>
<feature type="strand" evidence="30">
    <location>
        <begin position="499"/>
        <end position="501"/>
    </location>
</feature>
<feature type="strand" evidence="30">
    <location>
        <begin position="507"/>
        <end position="509"/>
    </location>
</feature>
<feature type="helix" evidence="29">
    <location>
        <begin position="510"/>
        <end position="515"/>
    </location>
</feature>
<feature type="turn" evidence="29">
    <location>
        <begin position="516"/>
        <end position="520"/>
    </location>
</feature>
<feature type="strand" evidence="30">
    <location>
        <begin position="521"/>
        <end position="523"/>
    </location>
</feature>
<feature type="helix" evidence="29">
    <location>
        <begin position="525"/>
        <end position="536"/>
    </location>
</feature>
<feature type="turn" evidence="29">
    <location>
        <begin position="540"/>
        <end position="545"/>
    </location>
</feature>
<feature type="strand" evidence="29">
    <location>
        <begin position="549"/>
        <end position="552"/>
    </location>
</feature>
<feature type="turn" evidence="32">
    <location>
        <begin position="567"/>
        <end position="569"/>
    </location>
</feature>
<feature type="turn" evidence="30">
    <location>
        <begin position="571"/>
        <end position="573"/>
    </location>
</feature>
<feature type="helix" evidence="30">
    <location>
        <begin position="574"/>
        <end position="582"/>
    </location>
</feature>
<feature type="strand" evidence="29">
    <location>
        <begin position="590"/>
        <end position="593"/>
    </location>
</feature>
<feature type="strand" evidence="29">
    <location>
        <begin position="599"/>
        <end position="608"/>
    </location>
</feature>
<feature type="strand" evidence="29">
    <location>
        <begin position="611"/>
        <end position="620"/>
    </location>
</feature>
<feature type="strand" evidence="29">
    <location>
        <begin position="625"/>
        <end position="633"/>
    </location>
</feature>
<feature type="helix" evidence="29">
    <location>
        <begin position="637"/>
        <end position="639"/>
    </location>
</feature>
<feature type="helix" evidence="29">
    <location>
        <begin position="643"/>
        <end position="645"/>
    </location>
</feature>
<feature type="strand" evidence="29">
    <location>
        <begin position="646"/>
        <end position="650"/>
    </location>
</feature>
<feature type="helix" evidence="29">
    <location>
        <begin position="651"/>
        <end position="654"/>
    </location>
</feature>
<feature type="helix" evidence="29">
    <location>
        <begin position="660"/>
        <end position="662"/>
    </location>
</feature>
<feature type="strand" evidence="33">
    <location>
        <begin position="664"/>
        <end position="666"/>
    </location>
</feature>
<feature type="strand" evidence="29">
    <location>
        <begin position="668"/>
        <end position="672"/>
    </location>
</feature>
<feature type="helix" evidence="29">
    <location>
        <begin position="675"/>
        <end position="677"/>
    </location>
</feature>
<feature type="strand" evidence="29">
    <location>
        <begin position="683"/>
        <end position="692"/>
    </location>
</feature>
<feature type="strand" evidence="31">
    <location>
        <begin position="695"/>
        <end position="697"/>
    </location>
</feature>
<feature type="strand" evidence="29">
    <location>
        <begin position="699"/>
        <end position="706"/>
    </location>
</feature>
<feature type="helix" evidence="29">
    <location>
        <begin position="711"/>
        <end position="714"/>
    </location>
</feature>
<feature type="helix" evidence="34">
    <location>
        <begin position="717"/>
        <end position="719"/>
    </location>
</feature>
<evidence type="ECO:0000250" key="1"/>
<evidence type="ECO:0000250" key="2">
    <source>
        <dbReference type="UniProtKB" id="Q2TBA3"/>
    </source>
</evidence>
<evidence type="ECO:0000255" key="3">
    <source>
        <dbReference type="PROSITE-ProRule" id="PRU00114"/>
    </source>
</evidence>
<evidence type="ECO:0000256" key="4">
    <source>
        <dbReference type="SAM" id="MobiDB-lite"/>
    </source>
</evidence>
<evidence type="ECO:0000269" key="5">
    <source>
    </source>
</evidence>
<evidence type="ECO:0000269" key="6">
    <source>
    </source>
</evidence>
<evidence type="ECO:0000269" key="7">
    <source>
    </source>
</evidence>
<evidence type="ECO:0000269" key="8">
    <source>
    </source>
</evidence>
<evidence type="ECO:0000269" key="9">
    <source>
    </source>
</evidence>
<evidence type="ECO:0000269" key="10">
    <source>
    </source>
</evidence>
<evidence type="ECO:0000269" key="11">
    <source>
    </source>
</evidence>
<evidence type="ECO:0000269" key="12">
    <source>
    </source>
</evidence>
<evidence type="ECO:0000269" key="13">
    <source>
    </source>
</evidence>
<evidence type="ECO:0000269" key="14">
    <source>
    </source>
</evidence>
<evidence type="ECO:0000269" key="15">
    <source>
    </source>
</evidence>
<evidence type="ECO:0000269" key="16">
    <source>
    </source>
</evidence>
<evidence type="ECO:0000269" key="17">
    <source>
    </source>
</evidence>
<evidence type="ECO:0000269" key="18">
    <source>
    </source>
</evidence>
<evidence type="ECO:0000303" key="19">
    <source>
    </source>
</evidence>
<evidence type="ECO:0000303" key="20">
    <source>
    </source>
</evidence>
<evidence type="ECO:0000303" key="21">
    <source>
    </source>
</evidence>
<evidence type="ECO:0000303" key="22">
    <source>
    </source>
</evidence>
<evidence type="ECO:0000305" key="23"/>
<evidence type="ECO:0000312" key="24">
    <source>
        <dbReference type="HGNC" id="HGNC:6819"/>
    </source>
</evidence>
<evidence type="ECO:0007744" key="25">
    <source>
    </source>
</evidence>
<evidence type="ECO:0007744" key="26">
    <source>
    </source>
</evidence>
<evidence type="ECO:0007829" key="27">
    <source>
        <dbReference type="PDB" id="3BFO"/>
    </source>
</evidence>
<evidence type="ECO:0007829" key="28">
    <source>
        <dbReference type="PDB" id="3K0W"/>
    </source>
</evidence>
<evidence type="ECO:0007829" key="29">
    <source>
        <dbReference type="PDB" id="3UOA"/>
    </source>
</evidence>
<evidence type="ECO:0007829" key="30">
    <source>
        <dbReference type="PDB" id="3V55"/>
    </source>
</evidence>
<evidence type="ECO:0007829" key="31">
    <source>
        <dbReference type="PDB" id="6H4A"/>
    </source>
</evidence>
<evidence type="ECO:0007829" key="32">
    <source>
        <dbReference type="PDB" id="6YN9"/>
    </source>
</evidence>
<evidence type="ECO:0007829" key="33">
    <source>
        <dbReference type="PDB" id="7PAV"/>
    </source>
</evidence>
<evidence type="ECO:0007829" key="34">
    <source>
        <dbReference type="PDB" id="7PAW"/>
    </source>
</evidence>
<evidence type="ECO:0007829" key="35">
    <source>
        <dbReference type="PDB" id="8J5I"/>
    </source>
</evidence>
<sequence length="824" mass="92272">MSLLGDPLQALPPSAAPTGPLLAPPAGATLNRLREPLLRRLSELLDQAPEGRGWRRLAELAGSRGRLRLSCLDLEQCSLKVLEPEGSPSLCLLKLMGEKGCTVTELSDFLQAMEHTEVLQLLSPPGIKITVNPESKAVLAGQFVKLCCRATGHPFVQYQWFKMNKEIPNGNTSELIFNAVHVKDAGFYVCRVNNNFTFEFSQWSQLDVCDIPESFQRSVDGVSESKLQICVEPTSQKLMPGSTLVLQCVAVGSPIPHYQWFKNELPLTHETKKLYMVPYVDLEHQGTYWCHVYNDRDSQDSKKVEIIIGRTDEAVECTEDELNNLGHPDNKEQTTDQPLAKDKVALLIGNMNYREHPKLKAPLVDVYELTNLLRQLDFKVVSLLDLTEYEMRNAVDEFLLLLDKGVYGLLYYAGHGYENFGNSFMVPVDAPNPYRSENCLCVQNILKLMQEKETGLNVFLLDMCRKRNDYDDTIPILDALKVTANIVFGYATCQGAEAFEIQHSGLANGIFMKFLKDRLLEDKKITVLLDEVAEDMGKCHLTKGKQALEIRSSLSEKRALTDPIQGTEYSAESLVRNLQWAKAHELPESMCLKFDCGVQIQLGFAAEFSNVMIIYTSIVYKPPEIIMCDAYVTDFPLDLDIDPKDANKGTPEETGSYLVSKDLPKHCLYTRLSSLQKLKEHLVFTVCLSYQYSGLEDTVEDKQEVNVGKPLIAKLDMHRGLGRKTCFQTCLMSNGPYQSSAATSGGAGHYHSLQDPFHGVYHSHPGNPSNVTPADSCHCSRTPDAFISSFAHHASCHFSRSNVPVETTDEIPFSFSDRLRISEK</sequence>
<accession>Q9UDY8</accession>
<accession>Q9NTB7</accession>
<accession>Q9ULX4</accession>
<gene>
    <name evidence="20 24" type="primary">MALT1</name>
    <name evidence="19" type="synonym">MLT</name>
</gene>
<protein>
    <recommendedName>
        <fullName evidence="23">Mucosa-associated lymphoid tissue lymphoma translocation protein 1</fullName>
        <ecNumber evidence="18">3.4.22.-</ecNumber>
    </recommendedName>
    <alternativeName>
        <fullName evidence="19">MALT lymphoma-associated translocation</fullName>
    </alternativeName>
    <alternativeName>
        <fullName evidence="21">Paracaspase</fullName>
    </alternativeName>
</protein>
<reference key="1">
    <citation type="journal article" date="1999" name="Blood">
        <title>The apoptosis inhibitor gene API2 and a novel 18q gene, MLT, are recurrently rearranged in the t(11;18)(q21;q21) associated with mucosa-associated lymphoid tissue lymphomas.</title>
        <authorList>
            <person name="Dierlamm J."/>
            <person name="Baens M."/>
            <person name="Wlodarska I."/>
            <person name="Stefanova-Ouzounova M."/>
            <person name="Hernandez J.M."/>
            <person name="Hossfeld D.K."/>
            <person name="De Wolf-Peeters C."/>
            <person name="Hagemeijer A."/>
            <person name="Van den Berghe H."/>
            <person name="Marynen P."/>
        </authorList>
    </citation>
    <scope>NUCLEOTIDE SEQUENCE [MRNA] (ISOFORM 1)</scope>
    <scope>CHROMOSOMAL TRANSLOCATION</scope>
</reference>
<reference key="2">
    <citation type="journal article" date="1999" name="Oncogene">
        <title>A novel gene, MALT1 at 18q21, is involved in t(11;18)(q21;q21) found in low-grade B-cell lymphoma of mucosa-associated lymphoid tissue.</title>
        <authorList>
            <person name="Akagi T."/>
            <person name="Motegi M."/>
            <person name="Tamura A."/>
            <person name="Suzuki R."/>
            <person name="Hosokawa Y."/>
            <person name="Suzuki H."/>
            <person name="Ota H."/>
            <person name="Nakamura S."/>
            <person name="Morishima Y."/>
            <person name="Taniwaki M."/>
            <person name="Seto M."/>
        </authorList>
    </citation>
    <scope>NUCLEOTIDE SEQUENCE [MRNA] (ISOFORM 2)</scope>
    <scope>CHROMOSOMAL TRANSLOCATION</scope>
</reference>
<reference key="3">
    <citation type="journal article" date="2000" name="Mol. Cell">
        <title>Identification of paracaspases and metacaspases. Two ancient families of caspase-like proteins, one of which plays a key role in MALT lymphoma.</title>
        <authorList>
            <person name="Uren A.G."/>
            <person name="O'Rourke K."/>
            <person name="Aravind L."/>
            <person name="Pisabarro M.T."/>
            <person name="Seshagiri S."/>
            <person name="Koonin E.V."/>
            <person name="Dixit V.M."/>
        </authorList>
    </citation>
    <scope>NUCLEOTIDE SEQUENCE [MRNA] (ISOFORM 1)</scope>
    <scope>CHROMOSOMAL TRANSLOCATION</scope>
    <source>
        <tissue>Kidney</tissue>
    </source>
</reference>
<reference key="4">
    <citation type="journal article" date="2004" name="Genome Res.">
        <title>The status, quality, and expansion of the NIH full-length cDNA project: the Mammalian Gene Collection (MGC).</title>
        <authorList>
            <consortium name="The MGC Project Team"/>
        </authorList>
    </citation>
    <scope>NUCLEOTIDE SEQUENCE [LARGE SCALE MRNA] (ISOFORM 2)</scope>
    <source>
        <tissue>B-cell</tissue>
    </source>
</reference>
<reference key="5">
    <citation type="journal article" date="2007" name="BMC Genomics">
        <title>The full-ORF clone resource of the German cDNA consortium.</title>
        <authorList>
            <person name="Bechtel S."/>
            <person name="Rosenfelder H."/>
            <person name="Duda A."/>
            <person name="Schmidt C.P."/>
            <person name="Ernst U."/>
            <person name="Wellenreuther R."/>
            <person name="Mehrle A."/>
            <person name="Schuster C."/>
            <person name="Bahr A."/>
            <person name="Bloecker H."/>
            <person name="Heubner D."/>
            <person name="Hoerlein A."/>
            <person name="Michel G."/>
            <person name="Wedler H."/>
            <person name="Koehrer K."/>
            <person name="Ottenwaelder B."/>
            <person name="Poustka A."/>
            <person name="Wiemann S."/>
            <person name="Schupp I."/>
        </authorList>
    </citation>
    <scope>NUCLEOTIDE SEQUENCE [LARGE SCALE MRNA] OF 598-824</scope>
    <source>
        <tissue>Testis</tissue>
    </source>
</reference>
<reference key="6">
    <citation type="journal article" date="1999" name="Blood">
        <title>API1-MALT1-MLT is involved in mucosa-associated lymphoid tissue lymphoma with t(11;18).(q21;q21).</title>
        <authorList>
            <person name="Suzuki H."/>
            <person name="Motegi M."/>
            <person name="Akagi T."/>
            <person name="Hosokawa Y."/>
            <person name="Seto M."/>
        </authorList>
    </citation>
    <scope>ALTERNATIVE SPLICING</scope>
</reference>
<reference key="7">
    <citation type="journal article" date="2000" name="Am. J. Pathol.">
        <title>API2-MALT1 chimeric transcripts involved in mucosa-associated lymphoid tissue type lymphoma predict heterogeneous products.</title>
        <authorList>
            <person name="Motegi M."/>
            <person name="Yonezumi M."/>
            <person name="Suzuki H."/>
            <person name="Suzuki R."/>
            <person name="Hosokawa Y."/>
            <person name="Hosaka S."/>
            <person name="Kodera Y."/>
            <person name="Morishima Y."/>
            <person name="Nakamura S."/>
            <person name="Seto M."/>
        </authorList>
    </citation>
    <scope>CHROMOSOMAL TRANSLOCATION</scope>
</reference>
<reference key="8">
    <citation type="journal article" date="2001" name="J. Biol. Chem.">
        <title>Bcl10 and MALT1, independent targets of chromosomal translocation in MALT lymphoma, cooperate in a novel NF-kappa B signaling pathway.</title>
        <authorList>
            <person name="Lucas P.C."/>
            <person name="Yonezumi M."/>
            <person name="Inohara N."/>
            <person name="McAllister-Lucas L.M."/>
            <person name="Abazeed M.E."/>
            <person name="Chen F.F."/>
            <person name="Yamaoka S."/>
            <person name="Seto M."/>
            <person name="Nunez G."/>
        </authorList>
    </citation>
    <scope>FUNCTION</scope>
    <scope>MUTAGENESIS OF CYS-464</scope>
</reference>
<reference key="9">
    <citation type="journal article" date="2004" name="Mol. Cell">
        <title>The TRAF6 ubiquitin ligase and TAK1 kinase mediate IKK activation by BCL10 and MALT1 in T lymphocytes.</title>
        <authorList>
            <person name="Sun L."/>
            <person name="Deng L."/>
            <person name="Ea C.-K."/>
            <person name="Xia Z.-P."/>
            <person name="Chen Z.J."/>
        </authorList>
    </citation>
    <scope>OLIGOMERIZATION</scope>
    <scope>INTERACTION WITH TRAF6</scope>
    <scope>MUTAGENESIS OF GLU-653 AND GLU-806</scope>
</reference>
<reference key="10">
    <citation type="journal article" date="2004" name="Nature">
        <title>Bcl10 activates the NF-kappaB pathway through ubiquitination of NEMO.</title>
        <authorList>
            <person name="Zhou H."/>
            <person name="Wertz I."/>
            <person name="O'Rourke K."/>
            <person name="Ultsch M."/>
            <person name="Seshagiri S."/>
            <person name="Eby M."/>
            <person name="Xiao W."/>
            <person name="Dixit V.M."/>
        </authorList>
    </citation>
    <scope>FUNCTION AS A UBIQUITIN LIGASE</scope>
</reference>
<reference key="11">
    <citation type="journal article" date="2005" name="Blood">
        <title>MALT1 contains nuclear export signals and regulates cytoplasmic localization of BCL10.</title>
        <authorList>
            <person name="Nakagawa M."/>
            <person name="Hosokawa Y."/>
            <person name="Yonezumi M."/>
            <person name="Izumiyama K."/>
            <person name="Suzuki R."/>
            <person name="Tsuzuki S."/>
            <person name="Asaka M."/>
            <person name="Seto M."/>
        </authorList>
    </citation>
    <scope>SUBCELLULAR LOCATION</scope>
    <scope>NUCLEAR EXPORT SIGNAL</scope>
</reference>
<reference key="12">
    <citation type="journal article" date="2008" name="Nat. Immunol.">
        <title>The proteolytic activity of the paracaspase MALT1 is key in T cell activation.</title>
        <authorList>
            <person name="Rebeaud F."/>
            <person name="Hailfinger S."/>
            <person name="Posevitz-Fejfar A."/>
            <person name="Tapernoux M."/>
            <person name="Moser R."/>
            <person name="Rueda D."/>
            <person name="Gaide O."/>
            <person name="Guzzardi M."/>
            <person name="Iancu E.M."/>
            <person name="Rufer N."/>
            <person name="Fasel N."/>
            <person name="Thome M."/>
        </authorList>
    </citation>
    <scope>FUNCTION</scope>
</reference>
<reference key="13">
    <citation type="journal article" date="2008" name="Proc. Natl. Acad. Sci. U.S.A.">
        <title>A quantitative atlas of mitotic phosphorylation.</title>
        <authorList>
            <person name="Dephoure N."/>
            <person name="Zhou C."/>
            <person name="Villen J."/>
            <person name="Beausoleil S.A."/>
            <person name="Bakalarski C.E."/>
            <person name="Elledge S.J."/>
            <person name="Gygi S.P."/>
        </authorList>
    </citation>
    <scope>PHOSPHORYLATION [LARGE SCALE ANALYSIS] AT SER-135</scope>
    <scope>IDENTIFICATION BY MASS SPECTROMETRY [LARGE SCALE ANALYSIS]</scope>
    <source>
        <tissue>Cervix carcinoma</tissue>
    </source>
</reference>
<reference key="14">
    <citation type="journal article" date="2011" name="BMC Syst. Biol.">
        <title>Initial characterization of the human central proteome.</title>
        <authorList>
            <person name="Burkard T.R."/>
            <person name="Planyavsky M."/>
            <person name="Kaupe I."/>
            <person name="Breitwieser F.P."/>
            <person name="Buerckstuemmer T."/>
            <person name="Bennett K.L."/>
            <person name="Superti-Furga G."/>
            <person name="Colinge J."/>
        </authorList>
    </citation>
    <scope>IDENTIFICATION BY MASS SPECTROMETRY [LARGE SCALE ANALYSIS]</scope>
</reference>
<reference key="15">
    <citation type="journal article" date="2012" name="Proc. Natl. Acad. Sci. U.S.A.">
        <title>N-terminal acetylome analyses and functional insights of the N-terminal acetyltransferase NatB.</title>
        <authorList>
            <person name="Van Damme P."/>
            <person name="Lasa M."/>
            <person name="Polevoda B."/>
            <person name="Gazquez C."/>
            <person name="Elosegui-Artola A."/>
            <person name="Kim D.S."/>
            <person name="De Juan-Pardo E."/>
            <person name="Demeyer K."/>
            <person name="Hole K."/>
            <person name="Larrea E."/>
            <person name="Timmerman E."/>
            <person name="Prieto J."/>
            <person name="Arnesen T."/>
            <person name="Sherman F."/>
            <person name="Gevaert K."/>
            <person name="Aldabe R."/>
        </authorList>
    </citation>
    <scope>ACETYLATION [LARGE SCALE ANALYSIS] AT SER-2</scope>
    <scope>CLEAVAGE OF INITIATOR METHIONINE [LARGE SCALE ANALYSIS]</scope>
    <scope>IDENTIFICATION BY MASS SPECTROMETRY [LARGE SCALE ANALYSIS]</scope>
</reference>
<reference key="16">
    <citation type="journal article" date="2013" name="Mol. Cell">
        <title>Structural architecture of the CARMA1/Bcl10/MALT1 signalosome: nucleation-induced filamentous assembly.</title>
        <authorList>
            <person name="Qiao Q."/>
            <person name="Yang C."/>
            <person name="Zheng C."/>
            <person name="Fontan L."/>
            <person name="David L."/>
            <person name="Yu X."/>
            <person name="Bracken C."/>
            <person name="Rosen M."/>
            <person name="Melnick A."/>
            <person name="Egelman E.H."/>
            <person name="Wu H."/>
        </authorList>
    </citation>
    <scope>FUNCTION</scope>
    <scope>IDENTIFICATION IN A CBM COMPLEX</scope>
</reference>
<reference key="17">
    <citation type="journal article" date="2016" name="EMBO Rep.">
        <title>The paracaspase MALT1 mediates CARD14-induced signaling in keratinocytes.</title>
        <authorList>
            <person name="Afonina I.S."/>
            <person name="Van Nuffel E."/>
            <person name="Baudelet G."/>
            <person name="Driege Y."/>
            <person name="Kreike M."/>
            <person name="Staal J."/>
            <person name="Beyaert R."/>
        </authorList>
    </citation>
    <scope>SUBUNIT</scope>
</reference>
<reference key="18">
    <citation type="journal article" date="2017" name="Nat. Genet.">
        <title>Germline hypomorphic CARD11 mutations in severe atopic disease.</title>
        <authorList>
            <person name="Ma C.A."/>
            <person name="Stinson J.R."/>
            <person name="Zhang Y."/>
            <person name="Abbott J.K."/>
            <person name="Weinreich M.A."/>
            <person name="Hauk P.J."/>
            <person name="Reynolds P.R."/>
            <person name="Lyons J.J."/>
            <person name="Nelson C.G."/>
            <person name="Ruffo E."/>
            <person name="Dorjbal B."/>
            <person name="Glauzy S."/>
            <person name="Yamakawa N."/>
            <person name="Arjunaraja S."/>
            <person name="Voss K."/>
            <person name="Stoddard J."/>
            <person name="Niemela J."/>
            <person name="Zhang Y."/>
            <person name="Rosenzweig S.D."/>
            <person name="McElwee J.J."/>
            <person name="DiMaggio T."/>
            <person name="Matthews H.F."/>
            <person name="Jones N."/>
            <person name="Stone K.D."/>
            <person name="Palma A."/>
            <person name="Oleastro M."/>
            <person name="Prieto E."/>
            <person name="Bernasconi A.R."/>
            <person name="Dubra G."/>
            <person name="Danielian S."/>
            <person name="Zaiat J."/>
            <person name="Marti M.A."/>
            <person name="Kim B."/>
            <person name="Cooper M.A."/>
            <person name="Romberg N."/>
            <person name="Meffre E."/>
            <person name="Gelfand E.W."/>
            <person name="Snow A.L."/>
            <person name="Milner J.D."/>
        </authorList>
    </citation>
    <scope>INTERACTION WITH BCL10</scope>
</reference>
<reference key="19">
    <citation type="journal article" date="2019" name="Nat. Microbiol.">
        <title>N4BP1 restricts HIV-1 and its inactivation by MALT1 promotes viral reactivation.</title>
        <authorList>
            <person name="Yamasoba D."/>
            <person name="Sato K."/>
            <person name="Ichinose T."/>
            <person name="Imamura T."/>
            <person name="Koepke L."/>
            <person name="Joas S."/>
            <person name="Reith E."/>
            <person name="Hotter D."/>
            <person name="Misawa N."/>
            <person name="Akaki K."/>
            <person name="Uehata T."/>
            <person name="Mino T."/>
            <person name="Miyamoto S."/>
            <person name="Noda T."/>
            <person name="Yamashita A."/>
            <person name="Standley D.M."/>
            <person name="Kirchhoff F."/>
            <person name="Sauter D."/>
            <person name="Koyanagi Y."/>
            <person name="Takeuchi O."/>
        </authorList>
    </citation>
    <scope>FUNCTION</scope>
</reference>
<reference key="20">
    <citation type="journal article" date="2013" name="J. Allergy Clin. Immunol.">
        <title>A homozygous mucosa-associated lymphoid tissue 1 (MALT1) mutation in a family with combined immunodeficiency.</title>
        <authorList>
            <person name="Jabara H.H."/>
            <person name="Ohsumi T."/>
            <person name="Chou J."/>
            <person name="Massaad M.J."/>
            <person name="Benson H."/>
            <person name="Megarbane A."/>
            <person name="Chouery E."/>
            <person name="Mikhael R."/>
            <person name="Gorka O."/>
            <person name="Gewies A."/>
            <person name="Portales P."/>
            <person name="Nakayama T."/>
            <person name="Hosokawa H."/>
            <person name="Revy P."/>
            <person name="Herrod H."/>
            <person name="Le Deist F."/>
            <person name="Lefranc G."/>
            <person name="Ruland J."/>
            <person name="Geha R.S."/>
        </authorList>
    </citation>
    <scope>VARIANT IMD12 ILE-89</scope>
</reference>
<keyword id="KW-0002">3D-structure</keyword>
<keyword id="KW-0007">Acetylation</keyword>
<keyword id="KW-0025">Alternative splicing</keyword>
<keyword id="KW-0160">Chromosomal rearrangement</keyword>
<keyword id="KW-0963">Cytoplasm</keyword>
<keyword id="KW-0225">Disease variant</keyword>
<keyword id="KW-1015">Disulfide bond</keyword>
<keyword id="KW-0378">Hydrolase</keyword>
<keyword id="KW-0391">Immunity</keyword>
<keyword id="KW-0393">Immunoglobulin domain</keyword>
<keyword id="KW-0539">Nucleus</keyword>
<keyword id="KW-0597">Phosphoprotein</keyword>
<keyword id="KW-0645">Protease</keyword>
<keyword id="KW-1267">Proteomics identification</keyword>
<keyword id="KW-1185">Reference proteome</keyword>
<keyword id="KW-0677">Repeat</keyword>
<keyword id="KW-0833">Ubl conjugation pathway</keyword>
<comment type="function">
    <text evidence="2 9 10 13 15 18">Protease that enhances BCL10-induced activation: acts via formation of CBM complexes that channel adaptive and innate immune signaling downstream of CARD domain-containing proteins (CARD9, CARD11 and CARD14) to activate NF-kappa-B and MAP kinase p38 pathways which stimulate expression of genes encoding pro-inflammatory cytokines and chemokines (PubMed:11262391, PubMed:18264101, PubMed:24074955). Mediates BCL10 cleavage: MALT1-dependent BCL10 cleavage plays an important role in T-cell antigen receptor-induced integrin adhesion (PubMed:11262391, PubMed:18264101). Involved in the induction of T helper 17 cells (Th17) differentiation (PubMed:11262391, PubMed:18264101). Cleaves RC3H1 and ZC3H12A in response to T-cell receptor (TCR) stimulation which releases their cooperatively repressed targets to promote Th17 cell differentiation (By similarity). Also mediates cleavage of N4BP1 in T-cells following TCR-mediated activation, leading to N4BP1 inactivation (PubMed:31133753). May also have ubiquitin ligase activity: binds to TRAF6, inducing TRAF6 oligomerization and activation of its ligase activity (PubMed:14695475).</text>
</comment>
<comment type="subunit">
    <text evidence="2 11 15 16 17">Homooligomer; forms oligomers which bind to TRAF6 (PubMed:15125833). Forms a complex with CARD14 and MALT1; resulting in the formation of a CBM (CARD14-BCL10-MALT1) complex (PubMed:27113748). Forms a complex with CARD11 and MALT1; resulting in the formation of a CBM (CARD11-BCL10-MALT1) complex (PubMed:24074955, PubMed:28628108). Forms a complex with CARD9 and MALT1; resulting in the formation of a CBM (CARD9-BCL10-MALT1) complex (By similarity).</text>
</comment>
<comment type="interaction">
    <interactant intactId="EBI-1047372">
        <id>Q9UDY8</id>
    </interactant>
    <interactant intactId="EBI-958922">
        <id>O95999</id>
        <label>BCL10</label>
    </interactant>
    <organismsDiffer>false</organismsDiffer>
    <experiments>24</experiments>
</comment>
<comment type="interaction">
    <interactant intactId="EBI-1047372">
        <id>Q9UDY8</id>
    </interactant>
    <interactant intactId="EBI-7006141">
        <id>Q9BXL7</id>
        <label>CARD11</label>
    </interactant>
    <organismsDiffer>false</organismsDiffer>
    <experiments>2</experiments>
</comment>
<comment type="interaction">
    <interactant intactId="EBI-1047372">
        <id>Q9UDY8</id>
    </interactant>
    <interactant intactId="EBI-78060">
        <id>Q14790</id>
        <label>CASP8</label>
    </interactant>
    <organismsDiffer>false</organismsDiffer>
    <experiments>10</experiments>
</comment>
<comment type="interaction">
    <interactant intactId="EBI-1047372">
        <id>Q9UDY8</id>
    </interactant>
    <interactant intactId="EBI-1383726">
        <id>P48729</id>
        <label>CSNK1A1</label>
    </interactant>
    <organismsDiffer>false</organismsDiffer>
    <experiments>7</experiments>
</comment>
<comment type="interaction">
    <interactant intactId="EBI-1047372">
        <id>Q9UDY8</id>
    </interactant>
    <interactant intactId="EBI-81279">
        <id>Q9Y6K9</id>
        <label>IKBKG</label>
    </interactant>
    <organismsDiffer>false</organismsDiffer>
    <experiments>4</experiments>
</comment>
<comment type="interaction">
    <interactant intactId="EBI-1047372">
        <id>Q9UDY8</id>
    </interactant>
    <interactant intactId="EBI-1047372">
        <id>Q9UDY8</id>
        <label>MALT1</label>
    </interactant>
    <organismsDiffer>false</organismsDiffer>
    <experiments>2</experiments>
</comment>
<comment type="interaction">
    <interactant intactId="EBI-1047372">
        <id>Q9UDY8</id>
    </interactant>
    <interactant intactId="EBI-945792">
        <id>Q96PU8</id>
        <label>QKI</label>
    </interactant>
    <organismsDiffer>false</organismsDiffer>
    <experiments>2</experiments>
</comment>
<comment type="interaction">
    <interactant intactId="EBI-1047372">
        <id>Q9UDY8</id>
    </interactant>
    <interactant intactId="EBI-3942966">
        <id>Q9H0F6</id>
        <label>SHARPIN</label>
    </interactant>
    <organismsDiffer>false</organismsDiffer>
    <experiments>2</experiments>
</comment>
<comment type="interaction">
    <interactant intactId="EBI-1047372">
        <id>Q9UDY8</id>
    </interactant>
    <interactant intactId="EBI-307104">
        <id>Q13501</id>
        <label>SQSTM1</label>
    </interactant>
    <organismsDiffer>false</organismsDiffer>
    <experiments>2</experiments>
</comment>
<comment type="interaction">
    <interactant intactId="EBI-1047372">
        <id>Q9UDY8</id>
    </interactant>
    <interactant intactId="EBI-359276">
        <id>Q9Y4K3</id>
        <label>TRAF6</label>
    </interactant>
    <organismsDiffer>false</organismsDiffer>
    <experiments>5</experiments>
</comment>
<comment type="interaction">
    <interactant intactId="EBI-1047372">
        <id>Q9UDY8</id>
    </interactant>
    <interactant intactId="EBI-3390054">
        <id>P0CG48</id>
        <label>UBC</label>
    </interactant>
    <organismsDiffer>false</organismsDiffer>
    <experiments>4</experiments>
</comment>
<comment type="interaction">
    <interactant intactId="EBI-12056869">
        <id>Q9UDY8-2</id>
    </interactant>
    <interactant intactId="EBI-946046">
        <id>P54252</id>
        <label>ATXN3</label>
    </interactant>
    <organismsDiffer>false</organismsDiffer>
    <experiments>3</experiments>
</comment>
<comment type="interaction">
    <interactant intactId="EBI-12056869">
        <id>Q9UDY8-2</id>
    </interactant>
    <interactant intactId="EBI-10988864">
        <id>P46379-2</id>
        <label>BAG6</label>
    </interactant>
    <organismsDiffer>false</organismsDiffer>
    <experiments>3</experiments>
</comment>
<comment type="interaction">
    <interactant intactId="EBI-12056869">
        <id>Q9UDY8-2</id>
    </interactant>
    <interactant intactId="EBI-10976677">
        <id>G5E9A7</id>
        <label>DMWD</label>
    </interactant>
    <organismsDiffer>false</organismsDiffer>
    <experiments>3</experiments>
</comment>
<comment type="interaction">
    <interactant intactId="EBI-12056869">
        <id>Q9UDY8-2</id>
    </interactant>
    <interactant intactId="EBI-10968534">
        <id>P50570-2</id>
        <label>DNM2</label>
    </interactant>
    <organismsDiffer>false</organismsDiffer>
    <experiments>3</experiments>
</comment>
<comment type="interaction">
    <interactant intactId="EBI-12056869">
        <id>Q9UDY8-2</id>
    </interactant>
    <interactant intactId="EBI-2515349">
        <id>Q9BSK4</id>
        <label>FEM1A</label>
    </interactant>
    <organismsDiffer>false</organismsDiffer>
    <experiments>3</experiments>
</comment>
<comment type="interaction">
    <interactant intactId="EBI-12056869">
        <id>Q9UDY8-2</id>
    </interactant>
    <interactant intactId="EBI-2515330">
        <id>Q96JP0</id>
        <label>FEM1C</label>
    </interactant>
    <organismsDiffer>false</organismsDiffer>
    <experiments>3</experiments>
</comment>
<comment type="interaction">
    <interactant intactId="EBI-12056869">
        <id>Q9UDY8-2</id>
    </interactant>
    <interactant intactId="EBI-747754">
        <id>P28799</id>
        <label>GRN</label>
    </interactant>
    <organismsDiffer>false</organismsDiffer>
    <experiments>3</experiments>
</comment>
<comment type="interaction">
    <interactant intactId="EBI-12056869">
        <id>Q9UDY8-2</id>
    </interactant>
    <interactant intactId="EBI-352682">
        <id>P04792</id>
        <label>HSPB1</label>
    </interactant>
    <organismsDiffer>false</organismsDiffer>
    <experiments>3</experiments>
</comment>
<comment type="interaction">
    <interactant intactId="EBI-12056869">
        <id>Q9UDY8-2</id>
    </interactant>
    <interactant intactId="EBI-10975473">
        <id>O60333-2</id>
        <label>KIF1B</label>
    </interactant>
    <organismsDiffer>false</organismsDiffer>
    <experiments>3</experiments>
</comment>
<comment type="interaction">
    <interactant intactId="EBI-12056869">
        <id>Q9UDY8-2</id>
    </interactant>
    <interactant intactId="EBI-948266">
        <id>O14901</id>
        <label>KLF11</label>
    </interactant>
    <organismsDiffer>false</organismsDiffer>
    <experiments>3</experiments>
</comment>
<comment type="interaction">
    <interactant intactId="EBI-12056869">
        <id>Q9UDY8-2</id>
    </interactant>
    <interactant intactId="EBI-721853">
        <id>O14832</id>
        <label>PHYH</label>
    </interactant>
    <organismsDiffer>false</organismsDiffer>
    <experiments>3</experiments>
</comment>
<comment type="interaction">
    <interactant intactId="EBI-12056869">
        <id>Q9UDY8-2</id>
    </interactant>
    <interactant intactId="EBI-749195">
        <id>P60891</id>
        <label>PRPS1</label>
    </interactant>
    <organismsDiffer>false</organismsDiffer>
    <experiments>3</experiments>
</comment>
<comment type="interaction">
    <interactant intactId="EBI-12056869">
        <id>Q9UDY8-2</id>
    </interactant>
    <interactant intactId="EBI-5235340">
        <id>Q7Z699</id>
        <label>SPRED1</label>
    </interactant>
    <organismsDiffer>false</organismsDiffer>
    <experiments>3</experiments>
</comment>
<comment type="interaction">
    <interactant intactId="EBI-12056869">
        <id>Q9UDY8-2</id>
    </interactant>
    <interactant intactId="EBI-720609">
        <id>O76024</id>
        <label>WFS1</label>
    </interactant>
    <organismsDiffer>false</organismsDiffer>
    <experiments>3</experiments>
</comment>
<comment type="subcellular location">
    <subcellularLocation>
        <location evidence="12">Cytoplasm</location>
        <location evidence="12">Perinuclear region</location>
    </subcellularLocation>
    <subcellularLocation>
        <location evidence="12">Nucleus</location>
    </subcellularLocation>
    <text evidence="12">Shuttles between the nucleus and cytoplasm. Found in perinuclear structures together with BCL10.</text>
</comment>
<comment type="alternative products">
    <event type="alternative splicing"/>
    <isoform>
        <id>Q9UDY8-1</id>
        <name>1</name>
        <sequence type="displayed"/>
    </isoform>
    <isoform>
        <id>Q9UDY8-2</id>
        <name>2</name>
        <sequence type="described" ref="VSP_000844"/>
    </isoform>
</comment>
<comment type="tissue specificity">
    <text>Highly expressed in peripheral blood mononuclear cells. Detected at lower levels in bone marrow, thymus and lymph node, and at very low levels in colon and lung.</text>
</comment>
<comment type="disease" evidence="14">
    <disease id="DI-03911">
        <name>Immunodeficiency 12</name>
        <acronym>IMD12</acronym>
        <description>A primary immunodeficiency characterized by onset in infancy of recurrent bacterial and candidal infections resulting in bronchiectasis and growth delay. Manifestations include mastoiditis, aphthous ulcers, cheilitis, gingivitis, esophagitis, gastritis, duodenitis, and meningitis. Levels of absolute lymphocytes and serum immunoglobulins are normal, but specific antibody titers are low despite immunization, and T-cells show impaired proliferative responses to mitogens.</description>
        <dbReference type="MIM" id="615468"/>
    </disease>
    <text>The disease is caused by variants affecting the gene represented in this entry.</text>
</comment>
<comment type="disease">
    <text evidence="5 6 7 8">A chromosomal aberration involving MALT1 is recurrent in low-grade mucosa-associated lymphoid tissue (MALT lymphoma). Translocation t(11;18)(q21;q21) with BIRC2. This translocation is found in approximately 50% of cytogenetically abnormal low-grade MALT lymphoma.</text>
</comment>
<comment type="similarity">
    <text evidence="23">Belongs to the peptidase C14B family.</text>
</comment>
<comment type="online information" name="Atlas of Genetics and Cytogenetics in Oncology and Haematology">
    <link uri="https://atlasgeneticsoncology.org/gene/240/MALT1"/>
</comment>
<name>MALT1_HUMAN</name>
<organism>
    <name type="scientific">Homo sapiens</name>
    <name type="common">Human</name>
    <dbReference type="NCBI Taxonomy" id="9606"/>
    <lineage>
        <taxon>Eukaryota</taxon>
        <taxon>Metazoa</taxon>
        <taxon>Chordata</taxon>
        <taxon>Craniata</taxon>
        <taxon>Vertebrata</taxon>
        <taxon>Euteleostomi</taxon>
        <taxon>Mammalia</taxon>
        <taxon>Eutheria</taxon>
        <taxon>Euarchontoglires</taxon>
        <taxon>Primates</taxon>
        <taxon>Haplorrhini</taxon>
        <taxon>Catarrhini</taxon>
        <taxon>Hominidae</taxon>
        <taxon>Homo</taxon>
    </lineage>
</organism>
<proteinExistence type="evidence at protein level"/>